<proteinExistence type="evidence at protein level"/>
<reference key="1">
    <citation type="journal article" date="2004" name="Nat. Genet.">
        <title>Complete sequencing and characterization of 21,243 full-length human cDNAs.</title>
        <authorList>
            <person name="Ota T."/>
            <person name="Suzuki Y."/>
            <person name="Nishikawa T."/>
            <person name="Otsuki T."/>
            <person name="Sugiyama T."/>
            <person name="Irie R."/>
            <person name="Wakamatsu A."/>
            <person name="Hayashi K."/>
            <person name="Sato H."/>
            <person name="Nagai K."/>
            <person name="Kimura K."/>
            <person name="Makita H."/>
            <person name="Sekine M."/>
            <person name="Obayashi M."/>
            <person name="Nishi T."/>
            <person name="Shibahara T."/>
            <person name="Tanaka T."/>
            <person name="Ishii S."/>
            <person name="Yamamoto J."/>
            <person name="Saito K."/>
            <person name="Kawai Y."/>
            <person name="Isono Y."/>
            <person name="Nakamura Y."/>
            <person name="Nagahari K."/>
            <person name="Murakami K."/>
            <person name="Yasuda T."/>
            <person name="Iwayanagi T."/>
            <person name="Wagatsuma M."/>
            <person name="Shiratori A."/>
            <person name="Sudo H."/>
            <person name="Hosoiri T."/>
            <person name="Kaku Y."/>
            <person name="Kodaira H."/>
            <person name="Kondo H."/>
            <person name="Sugawara M."/>
            <person name="Takahashi M."/>
            <person name="Kanda K."/>
            <person name="Yokoi T."/>
            <person name="Furuya T."/>
            <person name="Kikkawa E."/>
            <person name="Omura Y."/>
            <person name="Abe K."/>
            <person name="Kamihara K."/>
            <person name="Katsuta N."/>
            <person name="Sato K."/>
            <person name="Tanikawa M."/>
            <person name="Yamazaki M."/>
            <person name="Ninomiya K."/>
            <person name="Ishibashi T."/>
            <person name="Yamashita H."/>
            <person name="Murakawa K."/>
            <person name="Fujimori K."/>
            <person name="Tanai H."/>
            <person name="Kimata M."/>
            <person name="Watanabe M."/>
            <person name="Hiraoka S."/>
            <person name="Chiba Y."/>
            <person name="Ishida S."/>
            <person name="Ono Y."/>
            <person name="Takiguchi S."/>
            <person name="Watanabe S."/>
            <person name="Yosida M."/>
            <person name="Hotuta T."/>
            <person name="Kusano J."/>
            <person name="Kanehori K."/>
            <person name="Takahashi-Fujii A."/>
            <person name="Hara H."/>
            <person name="Tanase T.-O."/>
            <person name="Nomura Y."/>
            <person name="Togiya S."/>
            <person name="Komai F."/>
            <person name="Hara R."/>
            <person name="Takeuchi K."/>
            <person name="Arita M."/>
            <person name="Imose N."/>
            <person name="Musashino K."/>
            <person name="Yuuki H."/>
            <person name="Oshima A."/>
            <person name="Sasaki N."/>
            <person name="Aotsuka S."/>
            <person name="Yoshikawa Y."/>
            <person name="Matsunawa H."/>
            <person name="Ichihara T."/>
            <person name="Shiohata N."/>
            <person name="Sano S."/>
            <person name="Moriya S."/>
            <person name="Momiyama H."/>
            <person name="Satoh N."/>
            <person name="Takami S."/>
            <person name="Terashima Y."/>
            <person name="Suzuki O."/>
            <person name="Nakagawa S."/>
            <person name="Senoh A."/>
            <person name="Mizoguchi H."/>
            <person name="Goto Y."/>
            <person name="Shimizu F."/>
            <person name="Wakebe H."/>
            <person name="Hishigaki H."/>
            <person name="Watanabe T."/>
            <person name="Sugiyama A."/>
            <person name="Takemoto M."/>
            <person name="Kawakami B."/>
            <person name="Yamazaki M."/>
            <person name="Watanabe K."/>
            <person name="Kumagai A."/>
            <person name="Itakura S."/>
            <person name="Fukuzumi Y."/>
            <person name="Fujimori Y."/>
            <person name="Komiyama M."/>
            <person name="Tashiro H."/>
            <person name="Tanigami A."/>
            <person name="Fujiwara T."/>
            <person name="Ono T."/>
            <person name="Yamada K."/>
            <person name="Fujii Y."/>
            <person name="Ozaki K."/>
            <person name="Hirao M."/>
            <person name="Ohmori Y."/>
            <person name="Kawabata A."/>
            <person name="Hikiji T."/>
            <person name="Kobatake N."/>
            <person name="Inagaki H."/>
            <person name="Ikema Y."/>
            <person name="Okamoto S."/>
            <person name="Okitani R."/>
            <person name="Kawakami T."/>
            <person name="Noguchi S."/>
            <person name="Itoh T."/>
            <person name="Shigeta K."/>
            <person name="Senba T."/>
            <person name="Matsumura K."/>
            <person name="Nakajima Y."/>
            <person name="Mizuno T."/>
            <person name="Morinaga M."/>
            <person name="Sasaki M."/>
            <person name="Togashi T."/>
            <person name="Oyama M."/>
            <person name="Hata H."/>
            <person name="Watanabe M."/>
            <person name="Komatsu T."/>
            <person name="Mizushima-Sugano J."/>
            <person name="Satoh T."/>
            <person name="Shirai Y."/>
            <person name="Takahashi Y."/>
            <person name="Nakagawa K."/>
            <person name="Okumura K."/>
            <person name="Nagase T."/>
            <person name="Nomura N."/>
            <person name="Kikuchi H."/>
            <person name="Masuho Y."/>
            <person name="Yamashita R."/>
            <person name="Nakai K."/>
            <person name="Yada T."/>
            <person name="Nakamura Y."/>
            <person name="Ohara O."/>
            <person name="Isogai T."/>
            <person name="Sugano S."/>
        </authorList>
    </citation>
    <scope>NUCLEOTIDE SEQUENCE [LARGE SCALE MRNA]</scope>
</reference>
<reference key="2">
    <citation type="journal article" date="2003" name="Nature">
        <title>The DNA sequence and analysis of human chromosome 6.</title>
        <authorList>
            <person name="Mungall A.J."/>
            <person name="Palmer S.A."/>
            <person name="Sims S.K."/>
            <person name="Edwards C.A."/>
            <person name="Ashurst J.L."/>
            <person name="Wilming L."/>
            <person name="Jones M.C."/>
            <person name="Horton R."/>
            <person name="Hunt S.E."/>
            <person name="Scott C.E."/>
            <person name="Gilbert J.G.R."/>
            <person name="Clamp M.E."/>
            <person name="Bethel G."/>
            <person name="Milne S."/>
            <person name="Ainscough R."/>
            <person name="Almeida J.P."/>
            <person name="Ambrose K.D."/>
            <person name="Andrews T.D."/>
            <person name="Ashwell R.I.S."/>
            <person name="Babbage A.K."/>
            <person name="Bagguley C.L."/>
            <person name="Bailey J."/>
            <person name="Banerjee R."/>
            <person name="Barker D.J."/>
            <person name="Barlow K.F."/>
            <person name="Bates K."/>
            <person name="Beare D.M."/>
            <person name="Beasley H."/>
            <person name="Beasley O."/>
            <person name="Bird C.P."/>
            <person name="Blakey S.E."/>
            <person name="Bray-Allen S."/>
            <person name="Brook J."/>
            <person name="Brown A.J."/>
            <person name="Brown J.Y."/>
            <person name="Burford D.C."/>
            <person name="Burrill W."/>
            <person name="Burton J."/>
            <person name="Carder C."/>
            <person name="Carter N.P."/>
            <person name="Chapman J.C."/>
            <person name="Clark S.Y."/>
            <person name="Clark G."/>
            <person name="Clee C.M."/>
            <person name="Clegg S."/>
            <person name="Cobley V."/>
            <person name="Collier R.E."/>
            <person name="Collins J.E."/>
            <person name="Colman L.K."/>
            <person name="Corby N.R."/>
            <person name="Coville G.J."/>
            <person name="Culley K.M."/>
            <person name="Dhami P."/>
            <person name="Davies J."/>
            <person name="Dunn M."/>
            <person name="Earthrowl M.E."/>
            <person name="Ellington A.E."/>
            <person name="Evans K.A."/>
            <person name="Faulkner L."/>
            <person name="Francis M.D."/>
            <person name="Frankish A."/>
            <person name="Frankland J."/>
            <person name="French L."/>
            <person name="Garner P."/>
            <person name="Garnett J."/>
            <person name="Ghori M.J."/>
            <person name="Gilby L.M."/>
            <person name="Gillson C.J."/>
            <person name="Glithero R.J."/>
            <person name="Grafham D.V."/>
            <person name="Grant M."/>
            <person name="Gribble S."/>
            <person name="Griffiths C."/>
            <person name="Griffiths M.N.D."/>
            <person name="Hall R."/>
            <person name="Halls K.S."/>
            <person name="Hammond S."/>
            <person name="Harley J.L."/>
            <person name="Hart E.A."/>
            <person name="Heath P.D."/>
            <person name="Heathcott R."/>
            <person name="Holmes S.J."/>
            <person name="Howden P.J."/>
            <person name="Howe K.L."/>
            <person name="Howell G.R."/>
            <person name="Huckle E."/>
            <person name="Humphray S.J."/>
            <person name="Humphries M.D."/>
            <person name="Hunt A.R."/>
            <person name="Johnson C.M."/>
            <person name="Joy A.A."/>
            <person name="Kay M."/>
            <person name="Keenan S.J."/>
            <person name="Kimberley A.M."/>
            <person name="King A."/>
            <person name="Laird G.K."/>
            <person name="Langford C."/>
            <person name="Lawlor S."/>
            <person name="Leongamornlert D.A."/>
            <person name="Leversha M."/>
            <person name="Lloyd C.R."/>
            <person name="Lloyd D.M."/>
            <person name="Loveland J.E."/>
            <person name="Lovell J."/>
            <person name="Martin S."/>
            <person name="Mashreghi-Mohammadi M."/>
            <person name="Maslen G.L."/>
            <person name="Matthews L."/>
            <person name="McCann O.T."/>
            <person name="McLaren S.J."/>
            <person name="McLay K."/>
            <person name="McMurray A."/>
            <person name="Moore M.J.F."/>
            <person name="Mullikin J.C."/>
            <person name="Niblett D."/>
            <person name="Nickerson T."/>
            <person name="Novik K.L."/>
            <person name="Oliver K."/>
            <person name="Overton-Larty E.K."/>
            <person name="Parker A."/>
            <person name="Patel R."/>
            <person name="Pearce A.V."/>
            <person name="Peck A.I."/>
            <person name="Phillimore B.J.C.T."/>
            <person name="Phillips S."/>
            <person name="Plumb R.W."/>
            <person name="Porter K.M."/>
            <person name="Ramsey Y."/>
            <person name="Ranby S.A."/>
            <person name="Rice C.M."/>
            <person name="Ross M.T."/>
            <person name="Searle S.M."/>
            <person name="Sehra H.K."/>
            <person name="Sheridan E."/>
            <person name="Skuce C.D."/>
            <person name="Smith S."/>
            <person name="Smith M."/>
            <person name="Spraggon L."/>
            <person name="Squares S.L."/>
            <person name="Steward C.A."/>
            <person name="Sycamore N."/>
            <person name="Tamlyn-Hall G."/>
            <person name="Tester J."/>
            <person name="Theaker A.J."/>
            <person name="Thomas D.W."/>
            <person name="Thorpe A."/>
            <person name="Tracey A."/>
            <person name="Tromans A."/>
            <person name="Tubby B."/>
            <person name="Wall M."/>
            <person name="Wallis J.M."/>
            <person name="West A.P."/>
            <person name="White S.S."/>
            <person name="Whitehead S.L."/>
            <person name="Whittaker H."/>
            <person name="Wild A."/>
            <person name="Willey D.J."/>
            <person name="Wilmer T.E."/>
            <person name="Wood J.M."/>
            <person name="Wray P.W."/>
            <person name="Wyatt J.C."/>
            <person name="Young L."/>
            <person name="Younger R.M."/>
            <person name="Bentley D.R."/>
            <person name="Coulson A."/>
            <person name="Durbin R.M."/>
            <person name="Hubbard T."/>
            <person name="Sulston J.E."/>
            <person name="Dunham I."/>
            <person name="Rogers J."/>
            <person name="Beck S."/>
        </authorList>
    </citation>
    <scope>NUCLEOTIDE SEQUENCE [LARGE SCALE GENOMIC DNA]</scope>
</reference>
<reference key="3">
    <citation type="submission" date="2005-09" db="EMBL/GenBank/DDBJ databases">
        <authorList>
            <person name="Mural R.J."/>
            <person name="Istrail S."/>
            <person name="Sutton G.G."/>
            <person name="Florea L."/>
            <person name="Halpern A.L."/>
            <person name="Mobarry C.M."/>
            <person name="Lippert R."/>
            <person name="Walenz B."/>
            <person name="Shatkay H."/>
            <person name="Dew I."/>
            <person name="Miller J.R."/>
            <person name="Flanigan M.J."/>
            <person name="Edwards N.J."/>
            <person name="Bolanos R."/>
            <person name="Fasulo D."/>
            <person name="Halldorsson B.V."/>
            <person name="Hannenhalli S."/>
            <person name="Turner R."/>
            <person name="Yooseph S."/>
            <person name="Lu F."/>
            <person name="Nusskern D.R."/>
            <person name="Shue B.C."/>
            <person name="Zheng X.H."/>
            <person name="Zhong F."/>
            <person name="Delcher A.L."/>
            <person name="Huson D.H."/>
            <person name="Kravitz S.A."/>
            <person name="Mouchard L."/>
            <person name="Reinert K."/>
            <person name="Remington K.A."/>
            <person name="Clark A.G."/>
            <person name="Waterman M.S."/>
            <person name="Eichler E.E."/>
            <person name="Adams M.D."/>
            <person name="Hunkapiller M.W."/>
            <person name="Myers E.W."/>
            <person name="Venter J.C."/>
        </authorList>
    </citation>
    <scope>NUCLEOTIDE SEQUENCE [LARGE SCALE GENOMIC DNA]</scope>
</reference>
<reference key="4">
    <citation type="journal article" date="2004" name="Genome Res.">
        <title>The status, quality, and expansion of the NIH full-length cDNA project: the Mammalian Gene Collection (MGC).</title>
        <authorList>
            <consortium name="The MGC Project Team"/>
        </authorList>
    </citation>
    <scope>NUCLEOTIDE SEQUENCE [LARGE SCALE MRNA]</scope>
    <source>
        <tissue>Melanoma</tissue>
    </source>
</reference>
<reference key="5">
    <citation type="journal article" date="2000" name="DNA Res.">
        <title>Prediction of the coding sequences of unidentified human genes. XVII. The complete sequences of 100 new cDNA clones from brain which code for large proteins in vitro.</title>
        <authorList>
            <person name="Nagase T."/>
            <person name="Kikuno R."/>
            <person name="Ishikawa K."/>
            <person name="Hirosawa M."/>
            <person name="Ohara O."/>
        </authorList>
    </citation>
    <scope>NUCLEOTIDE SEQUENCE [LARGE SCALE MRNA] OF 87-514</scope>
    <source>
        <tissue>Brain</tissue>
    </source>
</reference>
<reference key="6">
    <citation type="journal article" date="2007" name="Science">
        <title>ATM and ATR substrate analysis reveals extensive protein networks responsive to DNA damage.</title>
        <authorList>
            <person name="Matsuoka S."/>
            <person name="Ballif B.A."/>
            <person name="Smogorzewska A."/>
            <person name="McDonald E.R. III"/>
            <person name="Hurov K.E."/>
            <person name="Luo J."/>
            <person name="Bakalarski C.E."/>
            <person name="Zhao Z."/>
            <person name="Solimini N."/>
            <person name="Lerenthal Y."/>
            <person name="Shiloh Y."/>
            <person name="Gygi S.P."/>
            <person name="Elledge S.J."/>
        </authorList>
    </citation>
    <scope>IDENTIFICATION BY MASS SPECTROMETRY [LARGE SCALE ANALYSIS]</scope>
    <source>
        <tissue>Embryonic kidney</tissue>
    </source>
</reference>
<reference key="7">
    <citation type="journal article" date="2014" name="J. Proteomics">
        <title>An enzyme assisted RP-RPLC approach for in-depth analysis of human liver phosphoproteome.</title>
        <authorList>
            <person name="Bian Y."/>
            <person name="Song C."/>
            <person name="Cheng K."/>
            <person name="Dong M."/>
            <person name="Wang F."/>
            <person name="Huang J."/>
            <person name="Sun D."/>
            <person name="Wang L."/>
            <person name="Ye M."/>
            <person name="Zou H."/>
        </authorList>
    </citation>
    <scope>PHOSPHORYLATION [LARGE SCALE ANALYSIS] AT SER-341</scope>
    <scope>IDENTIFICATION BY MASS SPECTROMETRY [LARGE SCALE ANALYSIS]</scope>
    <source>
        <tissue>Liver</tissue>
    </source>
</reference>
<reference key="8">
    <citation type="journal article" date="2014" name="Nat. Struct. Mol. Biol.">
        <title>Uncovering global SUMOylation signaling networks in a site-specific manner.</title>
        <authorList>
            <person name="Hendriks I.A."/>
            <person name="D'Souza R.C."/>
            <person name="Yang B."/>
            <person name="Verlaan-de Vries M."/>
            <person name="Mann M."/>
            <person name="Vertegaal A.C."/>
        </authorList>
    </citation>
    <scope>SUMOYLATION [LARGE SCALE ANALYSIS] AT LYS-505</scope>
    <scope>IDENTIFICATION BY MASS SPECTROMETRY [LARGE SCALE ANALYSIS]</scope>
</reference>
<reference key="9">
    <citation type="journal article" date="2015" name="Cell Rep.">
        <title>SUMO-2 orchestrates chromatin modifiers in response to DNA damage.</title>
        <authorList>
            <person name="Hendriks I.A."/>
            <person name="Treffers L.W."/>
            <person name="Verlaan-de Vries M."/>
            <person name="Olsen J.V."/>
            <person name="Vertegaal A.C."/>
        </authorList>
    </citation>
    <scope>SUMOYLATION [LARGE SCALE ANALYSIS] AT LYS-505</scope>
    <scope>IDENTIFICATION BY MASS SPECTROMETRY [LARGE SCALE ANALYSIS]</scope>
</reference>
<reference key="10">
    <citation type="journal article" date="2015" name="Mol. Cell. Proteomics">
        <title>System-wide analysis of SUMOylation dynamics in response to replication stress reveals novel small ubiquitin-like modified target proteins and acceptor lysines relevant for genome stability.</title>
        <authorList>
            <person name="Xiao Z."/>
            <person name="Chang J.G."/>
            <person name="Hendriks I.A."/>
            <person name="Sigurdsson J.O."/>
            <person name="Olsen J.V."/>
            <person name="Vertegaal A.C."/>
        </authorList>
    </citation>
    <scope>SUMOYLATION [LARGE SCALE ANALYSIS] AT LYS-362 AND LYS-505</scope>
    <scope>IDENTIFICATION BY MASS SPECTROMETRY [LARGE SCALE ANALYSIS]</scope>
</reference>
<reference key="11">
    <citation type="journal article" date="2017" name="Nat. Struct. Mol. Biol.">
        <title>Site-specific mapping of the human SUMO proteome reveals co-modification with phosphorylation.</title>
        <authorList>
            <person name="Hendriks I.A."/>
            <person name="Lyon D."/>
            <person name="Young C."/>
            <person name="Jensen L.J."/>
            <person name="Vertegaal A.C."/>
            <person name="Nielsen M.L."/>
        </authorList>
    </citation>
    <scope>SUMOYLATION [LARGE SCALE ANALYSIS] AT LYS-147; LYS-154; LYS-362; LYS-465; LYS-505 AND LYS-506</scope>
    <scope>IDENTIFICATION BY MASS SPECTROMETRY [LARGE SCALE ANALYSIS]</scope>
</reference>
<dbReference type="EMBL" id="AK291942">
    <property type="protein sequence ID" value="BAF84631.1"/>
    <property type="molecule type" value="mRNA"/>
</dbReference>
<dbReference type="EMBL" id="AL590413">
    <property type="status" value="NOT_ANNOTATED_CDS"/>
    <property type="molecule type" value="Genomic_DNA"/>
</dbReference>
<dbReference type="EMBL" id="CH471051">
    <property type="protein sequence ID" value="EAW47751.1"/>
    <property type="molecule type" value="Genomic_DNA"/>
</dbReference>
<dbReference type="EMBL" id="BC020172">
    <property type="protein sequence ID" value="AAH20172.1"/>
    <property type="molecule type" value="mRNA"/>
</dbReference>
<dbReference type="EMBL" id="AB040916">
    <property type="protein sequence ID" value="BAA96007.1"/>
    <property type="molecule type" value="mRNA"/>
</dbReference>
<dbReference type="CCDS" id="CCDS5231.1"/>
<dbReference type="RefSeq" id="NP_065912.1">
    <property type="nucleotide sequence ID" value="NM_020861.3"/>
</dbReference>
<dbReference type="RefSeq" id="XP_005267133.1">
    <property type="nucleotide sequence ID" value="XM_005267076.4"/>
</dbReference>
<dbReference type="RefSeq" id="XP_011534306.1">
    <property type="nucleotide sequence ID" value="XM_011536004.3"/>
</dbReference>
<dbReference type="RefSeq" id="XP_047275144.1">
    <property type="nucleotide sequence ID" value="XM_047419188.1"/>
</dbReference>
<dbReference type="RefSeq" id="XP_054212081.1">
    <property type="nucleotide sequence ID" value="XM_054356106.1"/>
</dbReference>
<dbReference type="RefSeq" id="XP_054212082.1">
    <property type="nucleotide sequence ID" value="XM_054356107.1"/>
</dbReference>
<dbReference type="RefSeq" id="XP_054212083.1">
    <property type="nucleotide sequence ID" value="XM_054356108.1"/>
</dbReference>
<dbReference type="BioGRID" id="121667">
    <property type="interactions" value="464"/>
</dbReference>
<dbReference type="DIP" id="DIP-53681N"/>
<dbReference type="FunCoup" id="Q8N680">
    <property type="interactions" value="1559"/>
</dbReference>
<dbReference type="IntAct" id="Q8N680">
    <property type="interactions" value="115"/>
</dbReference>
<dbReference type="MINT" id="Q8N680"/>
<dbReference type="STRING" id="9606.ENSP00000323183"/>
<dbReference type="ChEMBL" id="CHEMBL5069373"/>
<dbReference type="iPTMnet" id="Q8N680"/>
<dbReference type="PhosphoSitePlus" id="Q8N680"/>
<dbReference type="SwissPalm" id="Q8N680"/>
<dbReference type="BioMuta" id="ZBTB2"/>
<dbReference type="DMDM" id="30316315"/>
<dbReference type="jPOST" id="Q8N680"/>
<dbReference type="MassIVE" id="Q8N680"/>
<dbReference type="PaxDb" id="9606-ENSP00000323183"/>
<dbReference type="PeptideAtlas" id="Q8N680"/>
<dbReference type="ProteomicsDB" id="72136"/>
<dbReference type="Pumba" id="Q8N680"/>
<dbReference type="Antibodypedia" id="19926">
    <property type="antibodies" value="156 antibodies from 29 providers"/>
</dbReference>
<dbReference type="DNASU" id="57621"/>
<dbReference type="Ensembl" id="ENST00000325144.5">
    <property type="protein sequence ID" value="ENSP00000323183.4"/>
    <property type="gene ID" value="ENSG00000181472.5"/>
</dbReference>
<dbReference type="GeneID" id="57621"/>
<dbReference type="KEGG" id="hsa:57621"/>
<dbReference type="MANE-Select" id="ENST00000325144.5">
    <property type="protein sequence ID" value="ENSP00000323183.4"/>
    <property type="RefSeq nucleotide sequence ID" value="NM_020861.3"/>
    <property type="RefSeq protein sequence ID" value="NP_065912.1"/>
</dbReference>
<dbReference type="UCSC" id="uc003qoh.4">
    <property type="organism name" value="human"/>
</dbReference>
<dbReference type="AGR" id="HGNC:20868"/>
<dbReference type="CTD" id="57621"/>
<dbReference type="DisGeNET" id="57621"/>
<dbReference type="GeneCards" id="ZBTB2"/>
<dbReference type="HGNC" id="HGNC:20868">
    <property type="gene designation" value="ZBTB2"/>
</dbReference>
<dbReference type="HPA" id="ENSG00000181472">
    <property type="expression patterns" value="Low tissue specificity"/>
</dbReference>
<dbReference type="MIM" id="616595">
    <property type="type" value="gene"/>
</dbReference>
<dbReference type="neXtProt" id="NX_Q8N680"/>
<dbReference type="OpenTargets" id="ENSG00000181472"/>
<dbReference type="PharmGKB" id="PA134949885"/>
<dbReference type="VEuPathDB" id="HostDB:ENSG00000181472"/>
<dbReference type="eggNOG" id="KOG1721">
    <property type="taxonomic scope" value="Eukaryota"/>
</dbReference>
<dbReference type="GeneTree" id="ENSGT00940000158401"/>
<dbReference type="HOGENOM" id="CLU_025271_1_0_1"/>
<dbReference type="InParanoid" id="Q8N680"/>
<dbReference type="OMA" id="YSCHLCR"/>
<dbReference type="OrthoDB" id="10261408at2759"/>
<dbReference type="PAN-GO" id="Q8N680">
    <property type="GO annotations" value="4 GO annotations based on evolutionary models"/>
</dbReference>
<dbReference type="PhylomeDB" id="Q8N680"/>
<dbReference type="TreeFam" id="TF332229"/>
<dbReference type="PathwayCommons" id="Q8N680"/>
<dbReference type="SignaLink" id="Q8N680"/>
<dbReference type="BioGRID-ORCS" id="57621">
    <property type="hits" value="67 hits in 1217 CRISPR screens"/>
</dbReference>
<dbReference type="ChiTaRS" id="ZBTB2">
    <property type="organism name" value="human"/>
</dbReference>
<dbReference type="GenomeRNAi" id="57621"/>
<dbReference type="Pharos" id="Q8N680">
    <property type="development level" value="Tbio"/>
</dbReference>
<dbReference type="PRO" id="PR:Q8N680"/>
<dbReference type="Proteomes" id="UP000005640">
    <property type="component" value="Chromosome 6"/>
</dbReference>
<dbReference type="RNAct" id="Q8N680">
    <property type="molecule type" value="protein"/>
</dbReference>
<dbReference type="Bgee" id="ENSG00000181472">
    <property type="expression patterns" value="Expressed in secondary oocyte and 163 other cell types or tissues"/>
</dbReference>
<dbReference type="GO" id="GO:0005654">
    <property type="term" value="C:nucleoplasm"/>
    <property type="evidence" value="ECO:0000318"/>
    <property type="project" value="GO_Central"/>
</dbReference>
<dbReference type="GO" id="GO:0001227">
    <property type="term" value="F:DNA-binding transcription repressor activity, RNA polymerase II-specific"/>
    <property type="evidence" value="ECO:0000314"/>
    <property type="project" value="NTNU_SB"/>
</dbReference>
<dbReference type="GO" id="GO:0042802">
    <property type="term" value="F:identical protein binding"/>
    <property type="evidence" value="ECO:0000353"/>
    <property type="project" value="IntAct"/>
</dbReference>
<dbReference type="GO" id="GO:0000978">
    <property type="term" value="F:RNA polymerase II cis-regulatory region sequence-specific DNA binding"/>
    <property type="evidence" value="ECO:0000314"/>
    <property type="project" value="NTNU_SB"/>
</dbReference>
<dbReference type="GO" id="GO:1990837">
    <property type="term" value="F:sequence-specific double-stranded DNA binding"/>
    <property type="evidence" value="ECO:0000314"/>
    <property type="project" value="ARUK-UCL"/>
</dbReference>
<dbReference type="GO" id="GO:0008270">
    <property type="term" value="F:zinc ion binding"/>
    <property type="evidence" value="ECO:0007669"/>
    <property type="project" value="UniProtKB-KW"/>
</dbReference>
<dbReference type="GO" id="GO:0000122">
    <property type="term" value="P:negative regulation of transcription by RNA polymerase II"/>
    <property type="evidence" value="ECO:0000314"/>
    <property type="project" value="NTNU_SB"/>
</dbReference>
<dbReference type="GO" id="GO:0001817">
    <property type="term" value="P:regulation of cytokine production"/>
    <property type="evidence" value="ECO:0000318"/>
    <property type="project" value="GO_Central"/>
</dbReference>
<dbReference type="GO" id="GO:0002682">
    <property type="term" value="P:regulation of immune system process"/>
    <property type="evidence" value="ECO:0000318"/>
    <property type="project" value="GO_Central"/>
</dbReference>
<dbReference type="CDD" id="cd18193">
    <property type="entry name" value="BTB_POZ_ZBTB2"/>
    <property type="match status" value="1"/>
</dbReference>
<dbReference type="FunFam" id="3.30.160.60:FF:000398">
    <property type="entry name" value="Zinc finger and BTB domain-containing protein 2"/>
    <property type="match status" value="1"/>
</dbReference>
<dbReference type="FunFam" id="3.30.160.60:FF:002420">
    <property type="entry name" value="Zinc finger and BTB domain-containing protein 2"/>
    <property type="match status" value="1"/>
</dbReference>
<dbReference type="FunFam" id="3.30.710.10:FF:000073">
    <property type="entry name" value="Zinc finger and BTB domain-containing protein 2"/>
    <property type="match status" value="1"/>
</dbReference>
<dbReference type="Gene3D" id="3.30.160.60">
    <property type="entry name" value="Classic Zinc Finger"/>
    <property type="match status" value="2"/>
</dbReference>
<dbReference type="Gene3D" id="3.30.710.10">
    <property type="entry name" value="Potassium Channel Kv1.1, Chain A"/>
    <property type="match status" value="1"/>
</dbReference>
<dbReference type="InterPro" id="IPR000210">
    <property type="entry name" value="BTB/POZ_dom"/>
</dbReference>
<dbReference type="InterPro" id="IPR011333">
    <property type="entry name" value="SKP1/BTB/POZ_sf"/>
</dbReference>
<dbReference type="InterPro" id="IPR036236">
    <property type="entry name" value="Znf_C2H2_sf"/>
</dbReference>
<dbReference type="InterPro" id="IPR013087">
    <property type="entry name" value="Znf_C2H2_type"/>
</dbReference>
<dbReference type="PANTHER" id="PTHR24394:SF53">
    <property type="entry name" value="ZINC FINGER AND BTB DOMAIN CONTAINING 2"/>
    <property type="match status" value="1"/>
</dbReference>
<dbReference type="PANTHER" id="PTHR24394">
    <property type="entry name" value="ZINC FINGER PROTEIN"/>
    <property type="match status" value="1"/>
</dbReference>
<dbReference type="Pfam" id="PF00651">
    <property type="entry name" value="BTB"/>
    <property type="match status" value="1"/>
</dbReference>
<dbReference type="Pfam" id="PF00096">
    <property type="entry name" value="zf-C2H2"/>
    <property type="match status" value="3"/>
</dbReference>
<dbReference type="SMART" id="SM00225">
    <property type="entry name" value="BTB"/>
    <property type="match status" value="1"/>
</dbReference>
<dbReference type="SMART" id="SM00355">
    <property type="entry name" value="ZnF_C2H2"/>
    <property type="match status" value="4"/>
</dbReference>
<dbReference type="SUPFAM" id="SSF57667">
    <property type="entry name" value="beta-beta-alpha zinc fingers"/>
    <property type="match status" value="3"/>
</dbReference>
<dbReference type="SUPFAM" id="SSF54695">
    <property type="entry name" value="POZ domain"/>
    <property type="match status" value="1"/>
</dbReference>
<dbReference type="PROSITE" id="PS50097">
    <property type="entry name" value="BTB"/>
    <property type="match status" value="1"/>
</dbReference>
<dbReference type="PROSITE" id="PS00028">
    <property type="entry name" value="ZINC_FINGER_C2H2_1"/>
    <property type="match status" value="2"/>
</dbReference>
<dbReference type="PROSITE" id="PS50157">
    <property type="entry name" value="ZINC_FINGER_C2H2_2"/>
    <property type="match status" value="3"/>
</dbReference>
<protein>
    <recommendedName>
        <fullName>Zinc finger and BTB domain-containing protein 2</fullName>
    </recommendedName>
</protein>
<accession>Q8N680</accession>
<accession>A8K7C7</accession>
<accession>Q5SZ81</accession>
<accession>Q9P245</accession>
<evidence type="ECO:0000255" key="1">
    <source>
        <dbReference type="PROSITE-ProRule" id="PRU00037"/>
    </source>
</evidence>
<evidence type="ECO:0000255" key="2">
    <source>
        <dbReference type="PROSITE-ProRule" id="PRU00042"/>
    </source>
</evidence>
<evidence type="ECO:0000256" key="3">
    <source>
        <dbReference type="SAM" id="MobiDB-lite"/>
    </source>
</evidence>
<evidence type="ECO:0000305" key="4"/>
<evidence type="ECO:0007744" key="5">
    <source>
    </source>
</evidence>
<evidence type="ECO:0007744" key="6">
    <source>
    </source>
</evidence>
<evidence type="ECO:0007744" key="7">
    <source>
    </source>
</evidence>
<evidence type="ECO:0007744" key="8">
    <source>
    </source>
</evidence>
<evidence type="ECO:0007744" key="9">
    <source>
    </source>
</evidence>
<keyword id="KW-0238">DNA-binding</keyword>
<keyword id="KW-1017">Isopeptide bond</keyword>
<keyword id="KW-0479">Metal-binding</keyword>
<keyword id="KW-0539">Nucleus</keyword>
<keyword id="KW-0597">Phosphoprotein</keyword>
<keyword id="KW-1267">Proteomics identification</keyword>
<keyword id="KW-1185">Reference proteome</keyword>
<keyword id="KW-0677">Repeat</keyword>
<keyword id="KW-0804">Transcription</keyword>
<keyword id="KW-0805">Transcription regulation</keyword>
<keyword id="KW-0832">Ubl conjugation</keyword>
<keyword id="KW-0862">Zinc</keyword>
<keyword id="KW-0863">Zinc-finger</keyword>
<comment type="function">
    <text>May be involved in transcriptional regulation.</text>
</comment>
<comment type="interaction">
    <interactant intactId="EBI-2515601">
        <id>Q8N680</id>
    </interactant>
    <interactant intactId="EBI-77321">
        <id>Q9UER7</id>
        <label>DAXX</label>
    </interactant>
    <organismsDiffer>false</organismsDiffer>
    <experiments>3</experiments>
</comment>
<comment type="interaction">
    <interactant intactId="EBI-2515601">
        <id>Q8N680</id>
    </interactant>
    <interactant intactId="EBI-720116">
        <id>P60520</id>
        <label>GABARAPL2</label>
    </interactant>
    <organismsDiffer>false</organismsDiffer>
    <experiments>3</experiments>
</comment>
<comment type="interaction">
    <interactant intactId="EBI-2515601">
        <id>Q8N680</id>
    </interactant>
    <interactant intactId="EBI-747509">
        <id>Q9UHH9</id>
        <label>IP6K2</label>
    </interactant>
    <organismsDiffer>false</organismsDiffer>
    <experiments>3</experiments>
</comment>
<comment type="interaction">
    <interactant intactId="EBI-2515601">
        <id>Q8N680</id>
    </interactant>
    <interactant intactId="EBI-399080">
        <id>Q92993</id>
        <label>KAT5</label>
    </interactant>
    <organismsDiffer>false</organismsDiffer>
    <experiments>3</experiments>
</comment>
<comment type="interaction">
    <interactant intactId="EBI-2515601">
        <id>Q8N680</id>
    </interactant>
    <interactant intactId="EBI-2865388">
        <id>Q969G2</id>
        <label>LHX4</label>
    </interactant>
    <organismsDiffer>false</organismsDiffer>
    <experiments>3</experiments>
</comment>
<comment type="interaction">
    <interactant intactId="EBI-2515601">
        <id>Q8N680</id>
    </interactant>
    <interactant intactId="EBI-739832">
        <id>Q8TBB1</id>
        <label>LNX1</label>
    </interactant>
    <organismsDiffer>false</organismsDiffer>
    <experiments>3</experiments>
</comment>
<comment type="interaction">
    <interactant intactId="EBI-2515601">
        <id>Q8N680</id>
    </interactant>
    <interactant intactId="EBI-16439278">
        <id>Q6FHY5</id>
        <label>MEOX2</label>
    </interactant>
    <organismsDiffer>false</organismsDiffer>
    <experiments>3</experiments>
</comment>
<comment type="interaction">
    <interactant intactId="EBI-2515601">
        <id>Q8N680</id>
    </interactant>
    <interactant intactId="EBI-1048053">
        <id>Q9UL63</id>
        <label>MKLN1</label>
    </interactant>
    <organismsDiffer>false</organismsDiffer>
    <experiments>3</experiments>
</comment>
<comment type="interaction">
    <interactant intactId="EBI-2515601">
        <id>Q8N680</id>
    </interactant>
    <interactant intactId="EBI-1757866">
        <id>P00540</id>
        <label>MOS</label>
    </interactant>
    <organismsDiffer>false</organismsDiffer>
    <experiments>3</experiments>
</comment>
<comment type="interaction">
    <interactant intactId="EBI-2515601">
        <id>Q8N680</id>
    </interactant>
    <interactant intactId="EBI-5453723">
        <id>Q9Y3B7</id>
        <label>MRPL11</label>
    </interactant>
    <organismsDiffer>false</organismsDiffer>
    <experiments>3</experiments>
</comment>
<comment type="interaction">
    <interactant intactId="EBI-2515601">
        <id>Q8N680</id>
    </interactant>
    <interactant intactId="EBI-79165">
        <id>Q9NRD5</id>
        <label>PICK1</label>
    </interactant>
    <organismsDiffer>false</organismsDiffer>
    <experiments>3</experiments>
</comment>
<comment type="interaction">
    <interactant intactId="EBI-2515601">
        <id>Q8N680</id>
    </interactant>
    <interactant intactId="EBI-714158">
        <id>Q13526</id>
        <label>PIN1</label>
    </interactant>
    <organismsDiffer>false</organismsDiffer>
    <experiments>3</experiments>
</comment>
<comment type="interaction">
    <interactant intactId="EBI-2515601">
        <id>Q8N680</id>
    </interactant>
    <interactant intactId="EBI-10976415">
        <id>Q8NHQ8-2</id>
        <label>RASSF8</label>
    </interactant>
    <organismsDiffer>false</organismsDiffer>
    <experiments>4</experiments>
</comment>
<comment type="interaction">
    <interactant intactId="EBI-2515601">
        <id>Q8N680</id>
    </interactant>
    <interactant intactId="EBI-298336">
        <id>P08047</id>
        <label>SP1</label>
    </interactant>
    <organismsDiffer>false</organismsDiffer>
    <experiments>4</experiments>
</comment>
<comment type="interaction">
    <interactant intactId="EBI-2515601">
        <id>Q8N680</id>
    </interactant>
    <interactant intactId="EBI-80140">
        <id>P63165</id>
        <label>SUMO1</label>
    </interactant>
    <organismsDiffer>false</organismsDiffer>
    <experiments>3</experiments>
</comment>
<comment type="interaction">
    <interactant intactId="EBI-2515601">
        <id>Q8N680</id>
    </interactant>
    <interactant intactId="EBI-349968">
        <id>O43463</id>
        <label>SUV39H1</label>
    </interactant>
    <organismsDiffer>false</organismsDiffer>
    <experiments>3</experiments>
</comment>
<comment type="interaction">
    <interactant intactId="EBI-2515601">
        <id>Q8N680</id>
    </interactant>
    <interactant intactId="EBI-752030">
        <id>Q96A09</id>
        <label>TENT5B</label>
    </interactant>
    <organismsDiffer>false</organismsDiffer>
    <experiments>3</experiments>
</comment>
<comment type="interaction">
    <interactant intactId="EBI-2515601">
        <id>Q8N680</id>
    </interactant>
    <interactant intactId="EBI-9088037">
        <id>Q7Z403</id>
        <label>TMC6</label>
    </interactant>
    <organismsDiffer>false</organismsDiffer>
    <experiments>3</experiments>
</comment>
<comment type="interaction">
    <interactant intactId="EBI-2515601">
        <id>Q8N680</id>
    </interactant>
    <interactant intactId="EBI-10180829">
        <id>Q7KZS0</id>
        <label>UBE2I</label>
    </interactant>
    <organismsDiffer>false</organismsDiffer>
    <experiments>3</experiments>
</comment>
<comment type="interaction">
    <interactant intactId="EBI-2515601">
        <id>Q8N680</id>
    </interactant>
    <interactant intactId="EBI-3232046">
        <id>Q99592</id>
        <label>ZBTB18</label>
    </interactant>
    <organismsDiffer>false</organismsDiffer>
    <experiments>3</experiments>
</comment>
<comment type="interaction">
    <interactant intactId="EBI-2515601">
        <id>Q8N680</id>
    </interactant>
    <interactant intactId="EBI-2515601">
        <id>Q8N680</id>
        <label>ZBTB2</label>
    </interactant>
    <organismsDiffer>false</organismsDiffer>
    <experiments>3</experiments>
</comment>
<comment type="interaction">
    <interactant intactId="EBI-2515601">
        <id>Q8N680</id>
    </interactant>
    <interactant intactId="EBI-739899">
        <id>P24278</id>
        <label>ZBTB25</label>
    </interactant>
    <organismsDiffer>false</organismsDiffer>
    <experiments>5</experiments>
</comment>
<comment type="interaction">
    <interactant intactId="EBI-2515601">
        <id>Q8N680</id>
    </interactant>
    <interactant intactId="EBI-2859943">
        <id>Q6ZSB9</id>
        <label>ZBTB49</label>
    </interactant>
    <organismsDiffer>false</organismsDiffer>
    <experiments>3</experiments>
</comment>
<comment type="interaction">
    <interactant intactId="EBI-2515601">
        <id>Q8N680</id>
    </interactant>
    <interactant intactId="EBI-746595">
        <id>Q96E35</id>
        <label>ZMYND19</label>
    </interactant>
    <organismsDiffer>false</organismsDiffer>
    <experiments>3</experiments>
</comment>
<comment type="interaction">
    <interactant intactId="EBI-2515601">
        <id>Q8N680</id>
    </interactant>
    <interactant intactId="EBI-947476">
        <id>Q9UID6</id>
        <label>ZNF639</label>
    </interactant>
    <organismsDiffer>false</organismsDiffer>
    <experiments>7</experiments>
</comment>
<comment type="subcellular location">
    <subcellularLocation>
        <location evidence="4">Nucleus</location>
    </subcellularLocation>
</comment>
<gene>
    <name type="primary">ZBTB2</name>
    <name type="synonym">KIAA1483</name>
    <name type="synonym">ZNF437</name>
</gene>
<organism>
    <name type="scientific">Homo sapiens</name>
    <name type="common">Human</name>
    <dbReference type="NCBI Taxonomy" id="9606"/>
    <lineage>
        <taxon>Eukaryota</taxon>
        <taxon>Metazoa</taxon>
        <taxon>Chordata</taxon>
        <taxon>Craniata</taxon>
        <taxon>Vertebrata</taxon>
        <taxon>Euteleostomi</taxon>
        <taxon>Mammalia</taxon>
        <taxon>Eutheria</taxon>
        <taxon>Euarchontoglires</taxon>
        <taxon>Primates</taxon>
        <taxon>Haplorrhini</taxon>
        <taxon>Catarrhini</taxon>
        <taxon>Hominidae</taxon>
        <taxon>Homo</taxon>
    </lineage>
</organism>
<feature type="chain" id="PRO_0000047709" description="Zinc finger and BTB domain-containing protein 2">
    <location>
        <begin position="1"/>
        <end position="514"/>
    </location>
</feature>
<feature type="domain" description="BTB" evidence="1">
    <location>
        <begin position="24"/>
        <end position="89"/>
    </location>
</feature>
<feature type="zinc finger region" description="C2H2-type 1" evidence="2">
    <location>
        <begin position="254"/>
        <end position="276"/>
    </location>
</feature>
<feature type="zinc finger region" description="C2H2-type 2" evidence="2">
    <location>
        <begin position="363"/>
        <end position="385"/>
    </location>
</feature>
<feature type="zinc finger region" description="C2H2-type 3; atypical" evidence="2">
    <location>
        <begin position="390"/>
        <end position="410"/>
    </location>
</feature>
<feature type="zinc finger region" description="C2H2-type 4; atypical" evidence="2">
    <location>
        <begin position="448"/>
        <end position="468"/>
    </location>
</feature>
<feature type="region of interest" description="Disordered" evidence="3">
    <location>
        <begin position="149"/>
        <end position="231"/>
    </location>
</feature>
<feature type="compositionally biased region" description="Polar residues" evidence="3">
    <location>
        <begin position="161"/>
        <end position="200"/>
    </location>
</feature>
<feature type="compositionally biased region" description="Polar residues" evidence="3">
    <location>
        <begin position="222"/>
        <end position="231"/>
    </location>
</feature>
<feature type="modified residue" description="Phosphoserine" evidence="5">
    <location>
        <position position="341"/>
    </location>
</feature>
<feature type="cross-link" description="Glycyl lysine isopeptide (Lys-Gly) (interchain with G-Cter in SUMO2)" evidence="9">
    <location>
        <position position="147"/>
    </location>
</feature>
<feature type="cross-link" description="Glycyl lysine isopeptide (Lys-Gly) (interchain with G-Cter in SUMO2)" evidence="9">
    <location>
        <position position="154"/>
    </location>
</feature>
<feature type="cross-link" description="Glycyl lysine isopeptide (Lys-Gly) (interchain with G-Cter in SUMO2)" evidence="7 9">
    <location>
        <position position="362"/>
    </location>
</feature>
<feature type="cross-link" description="Glycyl lysine isopeptide (Lys-Gly) (interchain with G-Cter in SUMO2)" evidence="9">
    <location>
        <position position="465"/>
    </location>
</feature>
<feature type="cross-link" description="Glycyl lysine isopeptide (Lys-Gly) (interchain with G-Cter in SUMO2)" evidence="6 7 8 9">
    <location>
        <position position="505"/>
    </location>
</feature>
<feature type="cross-link" description="Glycyl lysine isopeptide (Lys-Gly) (interchain with G-Cter in SUMO2)" evidence="9">
    <location>
        <position position="506"/>
    </location>
</feature>
<feature type="sequence conflict" description="In Ref. 5; BAA96007." evidence="4" ref="5">
    <original>H</original>
    <variation>L</variation>
    <location>
        <position position="466"/>
    </location>
</feature>
<sequence length="514" mass="57337">MDLANHGLILLQQLNAQREFGFLCDCTVAIGDVYFKAHKSVLASFSNYFKMLFVHQTSECVRLKPTDIQPDIFSYLLHLMYTGKMAPQLIDPVRLEQGIKFLHAYPLIQEASLASQGAFSHPDQVFPLASSLYGIQIADHQLRQATKIASAPEKLGRDPRPQTSRISQEQVPEASQLSQLTSNLAQVNRTNMTPSDPLQTSLSPELVSTPVPPPPPGEETNLEASSSDEQPASLTIAHVKPSIMKRNGSFPKYYACHLCGRRFTLRSSLREHLQIHTGVPFTSSQQGESRVPLTLCSNAADLGKDAMEVPEAGMISDSELQHISDSPIIDGQQQSETPPPSDIADIDNLEQADQEREVKRRKYECTICGRKFIQKSHWREHMYIHTGKPFKCSTCDKSFCRANQAARHVCLNQSIDTYTMVDKQTLELCTFEEGSQMDNMLVQTNKPYKCNLCDKTFSTPNEVVKHSCQNQNSDVFALDEGRSILLGSGDSEVTEPDHPVLASIKKEQETVLLD</sequence>
<name>ZBTB2_HUMAN</name>